<keyword id="KW-0049">Antioxidant</keyword>
<keyword id="KW-0150">Chloroplast</keyword>
<keyword id="KW-0186">Copper</keyword>
<keyword id="KW-1015">Disulfide bond</keyword>
<keyword id="KW-0479">Metal-binding</keyword>
<keyword id="KW-0560">Oxidoreductase</keyword>
<keyword id="KW-0934">Plastid</keyword>
<keyword id="KW-0809">Transit peptide</keyword>
<keyword id="KW-0862">Zinc</keyword>
<protein>
    <recommendedName>
        <fullName>Superoxide dismutase [Cu-Zn], chloroplastic</fullName>
        <ecNumber>1.15.1.1</ecNumber>
    </recommendedName>
</protein>
<proteinExistence type="evidence at transcript level"/>
<gene>
    <name type="primary">SODCP</name>
    <name type="synonym">SOD2</name>
</gene>
<sequence>MASQTLVSPSPLSSHSLLRTSFSGVSVKLAPQFSTLATSNFKPLTVVAAAKKAVSVLKGTSAVEGVVTLTQDDEGPTTVNVRITGLTPGLHGFHLHEYGDTTNGCISTGPHFNPNKLTHGAPEDEIRHAGDLGNIVANAEGVAEATIVDNQIPLTGPNSVVGRALVVHELQDDLGKGGHELSLSTGNAGGRLACGVVGLTPV</sequence>
<dbReference type="EC" id="1.15.1.1"/>
<dbReference type="EMBL" id="J04087">
    <property type="protein sequence ID" value="AAA33688.1"/>
    <property type="molecule type" value="mRNA"/>
</dbReference>
<dbReference type="EMBL" id="X56435">
    <property type="protein sequence ID" value="CAA39819.1"/>
    <property type="molecule type" value="mRNA"/>
</dbReference>
<dbReference type="PIR" id="A30204">
    <property type="entry name" value="DSPMCZ"/>
</dbReference>
<dbReference type="SMR" id="P11964"/>
<dbReference type="OrthoDB" id="6497185at2759"/>
<dbReference type="BRENDA" id="1.15.1.1">
    <property type="organism ID" value="4872"/>
</dbReference>
<dbReference type="GO" id="GO:0009507">
    <property type="term" value="C:chloroplast"/>
    <property type="evidence" value="ECO:0007669"/>
    <property type="project" value="UniProtKB-SubCell"/>
</dbReference>
<dbReference type="GO" id="GO:0005507">
    <property type="term" value="F:copper ion binding"/>
    <property type="evidence" value="ECO:0007669"/>
    <property type="project" value="InterPro"/>
</dbReference>
<dbReference type="GO" id="GO:0004784">
    <property type="term" value="F:superoxide dismutase activity"/>
    <property type="evidence" value="ECO:0007669"/>
    <property type="project" value="UniProtKB-EC"/>
</dbReference>
<dbReference type="CDD" id="cd00305">
    <property type="entry name" value="Cu-Zn_Superoxide_Dismutase"/>
    <property type="match status" value="1"/>
</dbReference>
<dbReference type="FunFam" id="2.60.40.200:FF:000003">
    <property type="entry name" value="Superoxide dismutase [Cu-Zn], chloroplastic"/>
    <property type="match status" value="1"/>
</dbReference>
<dbReference type="Gene3D" id="2.60.40.200">
    <property type="entry name" value="Superoxide dismutase, copper/zinc binding domain"/>
    <property type="match status" value="1"/>
</dbReference>
<dbReference type="InterPro" id="IPR036423">
    <property type="entry name" value="SOD-like_Cu/Zn_dom_sf"/>
</dbReference>
<dbReference type="InterPro" id="IPR024134">
    <property type="entry name" value="SOD_Cu/Zn_/chaperone"/>
</dbReference>
<dbReference type="InterPro" id="IPR018152">
    <property type="entry name" value="SOD_Cu/Zn_BS"/>
</dbReference>
<dbReference type="InterPro" id="IPR001424">
    <property type="entry name" value="SOD_Cu_Zn_dom"/>
</dbReference>
<dbReference type="PANTHER" id="PTHR10003">
    <property type="entry name" value="SUPEROXIDE DISMUTASE CU-ZN -RELATED"/>
    <property type="match status" value="1"/>
</dbReference>
<dbReference type="Pfam" id="PF00080">
    <property type="entry name" value="Sod_Cu"/>
    <property type="match status" value="1"/>
</dbReference>
<dbReference type="PRINTS" id="PR00068">
    <property type="entry name" value="CUZNDISMTASE"/>
</dbReference>
<dbReference type="SUPFAM" id="SSF49329">
    <property type="entry name" value="Cu,Zn superoxide dismutase-like"/>
    <property type="match status" value="1"/>
</dbReference>
<dbReference type="PROSITE" id="PS00087">
    <property type="entry name" value="SOD_CU_ZN_1"/>
    <property type="match status" value="1"/>
</dbReference>
<dbReference type="PROSITE" id="PS00332">
    <property type="entry name" value="SOD_CU_ZN_2"/>
    <property type="match status" value="1"/>
</dbReference>
<accession>P11964</accession>
<name>SODCP_PEA</name>
<reference key="1">
    <citation type="journal article" date="1988" name="Proc. Natl. Acad. Sci. U.S.A.">
        <title>Cloning and characterization of a cDNA encoding the chloroplastic copper/zinc-superoxide dismutase from pea.</title>
        <authorList>
            <person name="Scioli J.R."/>
            <person name="Zilinskas B.A."/>
        </authorList>
    </citation>
    <scope>NUCLEOTIDE SEQUENCE [MRNA]</scope>
</reference>
<reference key="2">
    <citation type="journal article" date="1990" name="Plant Mol. Biol.">
        <title>Sequence divergence of pea Cu/Zn superoxide dismutase II cDNAs.</title>
        <authorList>
            <person name="Isin S.H."/>
            <person name="Burke J.J."/>
            <person name="Allen R.D."/>
        </authorList>
    </citation>
    <scope>NUCLEOTIDE SEQUENCE [MRNA]</scope>
</reference>
<evidence type="ECO:0000250" key="1"/>
<evidence type="ECO:0000305" key="2"/>
<organism>
    <name type="scientific">Pisum sativum</name>
    <name type="common">Garden pea</name>
    <name type="synonym">Lathyrus oleraceus</name>
    <dbReference type="NCBI Taxonomy" id="3888"/>
    <lineage>
        <taxon>Eukaryota</taxon>
        <taxon>Viridiplantae</taxon>
        <taxon>Streptophyta</taxon>
        <taxon>Embryophyta</taxon>
        <taxon>Tracheophyta</taxon>
        <taxon>Spermatophyta</taxon>
        <taxon>Magnoliopsida</taxon>
        <taxon>eudicotyledons</taxon>
        <taxon>Gunneridae</taxon>
        <taxon>Pentapetalae</taxon>
        <taxon>rosids</taxon>
        <taxon>fabids</taxon>
        <taxon>Fabales</taxon>
        <taxon>Fabaceae</taxon>
        <taxon>Papilionoideae</taxon>
        <taxon>50 kb inversion clade</taxon>
        <taxon>NPAAA clade</taxon>
        <taxon>Hologalegina</taxon>
        <taxon>IRL clade</taxon>
        <taxon>Fabeae</taxon>
        <taxon>Pisum</taxon>
    </lineage>
</organism>
<feature type="transit peptide" description="Chloroplast">
    <location>
        <begin position="1"/>
        <end position="48"/>
    </location>
</feature>
<feature type="chain" id="PRO_0000032848" description="Superoxide dismutase [Cu-Zn], chloroplastic">
    <location>
        <begin position="49"/>
        <end position="202"/>
    </location>
</feature>
<feature type="binding site" evidence="1">
    <location>
        <position position="94"/>
    </location>
    <ligand>
        <name>Cu cation</name>
        <dbReference type="ChEBI" id="CHEBI:23378"/>
        <note>catalytic</note>
    </ligand>
</feature>
<feature type="binding site" evidence="1">
    <location>
        <position position="96"/>
    </location>
    <ligand>
        <name>Cu cation</name>
        <dbReference type="ChEBI" id="CHEBI:23378"/>
        <note>catalytic</note>
    </ligand>
</feature>
<feature type="binding site" evidence="1">
    <location>
        <position position="111"/>
    </location>
    <ligand>
        <name>Cu cation</name>
        <dbReference type="ChEBI" id="CHEBI:23378"/>
        <note>catalytic</note>
    </ligand>
</feature>
<feature type="binding site" evidence="1">
    <location>
        <position position="111"/>
    </location>
    <ligand>
        <name>Zn(2+)</name>
        <dbReference type="ChEBI" id="CHEBI:29105"/>
        <note>structural</note>
    </ligand>
</feature>
<feature type="binding site" evidence="1">
    <location>
        <position position="119"/>
    </location>
    <ligand>
        <name>Zn(2+)</name>
        <dbReference type="ChEBI" id="CHEBI:29105"/>
        <note>structural</note>
    </ligand>
</feature>
<feature type="binding site" evidence="1">
    <location>
        <position position="128"/>
    </location>
    <ligand>
        <name>Zn(2+)</name>
        <dbReference type="ChEBI" id="CHEBI:29105"/>
        <note>structural</note>
    </ligand>
</feature>
<feature type="binding site" evidence="1">
    <location>
        <position position="131"/>
    </location>
    <ligand>
        <name>Zn(2+)</name>
        <dbReference type="ChEBI" id="CHEBI:29105"/>
        <note>structural</note>
    </ligand>
</feature>
<feature type="binding site" evidence="1">
    <location>
        <position position="168"/>
    </location>
    <ligand>
        <name>Cu cation</name>
        <dbReference type="ChEBI" id="CHEBI:23378"/>
        <note>catalytic</note>
    </ligand>
</feature>
<feature type="disulfide bond" evidence="1">
    <location>
        <begin position="105"/>
        <end position="194"/>
    </location>
</feature>
<feature type="sequence variant">
    <original>S</original>
    <variation>A</variation>
    <location>
        <position position="55"/>
    </location>
</feature>
<comment type="function">
    <text>Destroys radicals which are normally produced within the cells and which are toxic to biological systems.</text>
</comment>
<comment type="catalytic activity">
    <reaction>
        <text>2 superoxide + 2 H(+) = H2O2 + O2</text>
        <dbReference type="Rhea" id="RHEA:20696"/>
        <dbReference type="ChEBI" id="CHEBI:15378"/>
        <dbReference type="ChEBI" id="CHEBI:15379"/>
        <dbReference type="ChEBI" id="CHEBI:16240"/>
        <dbReference type="ChEBI" id="CHEBI:18421"/>
        <dbReference type="EC" id="1.15.1.1"/>
    </reaction>
</comment>
<comment type="cofactor">
    <cofactor evidence="1">
        <name>Cu cation</name>
        <dbReference type="ChEBI" id="CHEBI:23378"/>
    </cofactor>
    <text evidence="1">Binds 1 copper ion per subunit.</text>
</comment>
<comment type="cofactor">
    <cofactor evidence="1">
        <name>Zn(2+)</name>
        <dbReference type="ChEBI" id="CHEBI:29105"/>
    </cofactor>
    <text evidence="1">Binds 1 zinc ion per subunit.</text>
</comment>
<comment type="subunit">
    <text>Homotetramer.</text>
</comment>
<comment type="subcellular location">
    <subcellularLocation>
        <location>Plastid</location>
        <location>Chloroplast</location>
    </subcellularLocation>
</comment>
<comment type="similarity">
    <text evidence="2">Belongs to the Cu-Zn superoxide dismutase family.</text>
</comment>